<protein>
    <recommendedName>
        <fullName>Rho guanine nucleotide exchange factor 12</fullName>
    </recommendedName>
    <alternativeName>
        <fullName>Leukemia-associated RhoGEF</fullName>
    </alternativeName>
</protein>
<sequence length="1544" mass="173232">MSGTQSTITDRFPLKKPIRHGSILNRESPTDKKQKVERIASHDFDPTDSSSKKTKSSSEESRSEIYGLVQRCVIIQKDDNGFGLTVSGDNPVFVQSVKEDGAAMRAGVQTGDRIIKVNGTLVTHSNHLEVVKLIKSGSYVALTVQGRPPGSPQIPLADSEVEPSVIGHMSPIMTSPHSPGASGNMERITSPVLMGEENNVVHNQKVEILRKMLQKEQERLQLLQEDYNRTPAQRLLKEIQEAKKHIPQLQEQLSKATGSAQDGAVVTPSRPLGDTLTVSEAETDPGDVLGRTDCSSGDASRPSSDNADSPKSGPKERIYLEENPEKSETIQDTDTQSLVGSPSTRIAPHIIGAEDDDFGTEHEQINGQCSCFQSIELLKSRPAHLAVFLHHVVSQFDPATLLCYLYSDLYKHTNSKETRRIFLEFHQFFLDRSAHLKVSVPDEMSADLEKRRPELIPEDLHRHYIQTMQERVHPEVQRHLEDFRQKRSMGLTLAESELTKLDAERDKDRLTLEKERTCAEQIVAKIEEVLMTAQAVEEDKSSTMQYVILMYMKHLGVKVKEPRNLEHKRGRIGFLPKIKQSMKKDKEGEEKGKRRGFPSILGPPRRPSRHDNSAIGRAMELQKARHPKHLSTPSSVSPEPQDSAKLRQSGLANEGTDAGYLPANSMSSVASGASFSQEGGKENDTGSKQVGETSAPGDTLDGTPRTLNTVFDFPPPPLDQVQEEECEVERVTEHGTPKPFRKFDSVAFGESQSEDEQFENDLETDPPNWQQLVSREVLLGLKPCEIKRQEVINELFYTERAHVRTLKVLDQVFYQRVSREGILSPSELRKIFSNLEDILQLHIGLNEQMKAVRKRNETSVIDQIGEDLLTWFSGPGEEKLKHAAATFCSNQPFALEMIKSRQKKDSRFQTFVQDAESNPLCRRLQLKDIIPTQMQRLTKYPLLLDNIAKYTEWPTEREKVKKAADHCRQILNYVNQAVKEAENKQRLEDYQRRLDTSSLKLSEYPNVEELRNLDLTKRKMIHEGPLVWKVNRDKTIDLYTLLLEDILVLLQKQDDRLVLRCHSKILASTADSKHTFSPVIKLSTVLVRQVATDNKALFVISMSDNGAQIYELVAQTVSEKTVWQDLICRMAASVKEQSTKPIPLPQSTPGEGDNDEEDPSKLKEEQHGISVTGLQSPDRDLGLESTLISSKPQSHSLSTSGKSEVRDLFVAERQFAKEQHTDGTLKEVGEDYQIAIPDSHLPVSEERWALDALRNLGLLKQLLVQQLGLTEKSVQEDWQHFPRYRTASQGPQTDSVIQNSENIKAYHSGEGHMPFRTGTGDIATCYSPRTSTESFAPRDSVGLAPQDSQASNILVMDHMIMTPEMPTMEPEGGLDDSGEHFFDAREAHSDENPSEGDGAVNKEEKDVNLRISGNYLILDGYDPVQESSTDEEVASSLTLQPMTGIPAVESTHQQQHSPQNTHSDGAISPFTPEFLVQQRWGAMEYSCFEIQSPSSCADSQSQIMEYIHKIEADLEHLKKVEESYTILCQRLAGSALTDKHSDKS</sequence>
<feature type="initiator methionine" description="Removed" evidence="22">
    <location>
        <position position="1"/>
    </location>
</feature>
<feature type="chain" id="PRO_0000080930" description="Rho guanine nucleotide exchange factor 12">
    <location>
        <begin position="2"/>
        <end position="1544"/>
    </location>
</feature>
<feature type="domain" description="PDZ" evidence="3">
    <location>
        <begin position="72"/>
        <end position="151"/>
    </location>
</feature>
<feature type="domain" description="RGSL">
    <location>
        <begin position="367"/>
        <end position="558"/>
    </location>
</feature>
<feature type="domain" description="DH" evidence="2">
    <location>
        <begin position="787"/>
        <end position="977"/>
    </location>
</feature>
<feature type="domain" description="PH" evidence="4">
    <location>
        <begin position="1019"/>
        <end position="1132"/>
    </location>
</feature>
<feature type="region of interest" description="Disordered" evidence="5">
    <location>
        <begin position="1"/>
        <end position="62"/>
    </location>
</feature>
<feature type="region of interest" description="Disordered" evidence="5">
    <location>
        <begin position="247"/>
        <end position="346"/>
    </location>
</feature>
<feature type="region of interest" description="Disordered" evidence="5">
    <location>
        <begin position="570"/>
        <end position="706"/>
    </location>
</feature>
<feature type="region of interest" description="Disordered" evidence="5">
    <location>
        <begin position="1138"/>
        <end position="1179"/>
    </location>
</feature>
<feature type="coiled-coil region" evidence="1">
    <location>
        <begin position="194"/>
        <end position="262"/>
    </location>
</feature>
<feature type="compositionally biased region" description="Basic and acidic residues" evidence="5">
    <location>
        <begin position="28"/>
        <end position="45"/>
    </location>
</feature>
<feature type="compositionally biased region" description="Polar residues" evidence="5">
    <location>
        <begin position="249"/>
        <end position="260"/>
    </location>
</feature>
<feature type="compositionally biased region" description="Polar residues" evidence="5">
    <location>
        <begin position="293"/>
        <end position="309"/>
    </location>
</feature>
<feature type="compositionally biased region" description="Basic and acidic residues" evidence="5">
    <location>
        <begin position="313"/>
        <end position="329"/>
    </location>
</feature>
<feature type="compositionally biased region" description="Polar residues" evidence="5">
    <location>
        <begin position="330"/>
        <end position="344"/>
    </location>
</feature>
<feature type="compositionally biased region" description="Basic and acidic residues" evidence="5">
    <location>
        <begin position="582"/>
        <end position="592"/>
    </location>
</feature>
<feature type="compositionally biased region" description="Polar residues" evidence="5">
    <location>
        <begin position="631"/>
        <end position="640"/>
    </location>
</feature>
<feature type="compositionally biased region" description="Low complexity" evidence="5">
    <location>
        <begin position="663"/>
        <end position="676"/>
    </location>
</feature>
<feature type="compositionally biased region" description="Polar residues" evidence="5">
    <location>
        <begin position="1138"/>
        <end position="1149"/>
    </location>
</feature>
<feature type="site" description="Breakpoint for translocation to form KMT2A/MLL1-ARHGEF12 oncogene">
    <location>
        <begin position="308"/>
        <end position="309"/>
    </location>
</feature>
<feature type="modified residue" description="N-acetylserine" evidence="22">
    <location>
        <position position="2"/>
    </location>
</feature>
<feature type="modified residue" description="Phosphoserine" evidence="24">
    <location>
        <position position="41"/>
    </location>
</feature>
<feature type="modified residue" description="Phosphoserine" evidence="24 25">
    <location>
        <position position="309"/>
    </location>
</feature>
<feature type="modified residue" description="Phosphoserine" evidence="21 24">
    <location>
        <position position="341"/>
    </location>
</feature>
<feature type="modified residue" description="Phosphoserine" evidence="23 24 25">
    <location>
        <position position="637"/>
    </location>
</feature>
<feature type="modified residue" description="Phosphothreonine" evidence="19 24">
    <location>
        <position position="736"/>
    </location>
</feature>
<feature type="modified residue" description="Phosphoserine" evidence="24">
    <location>
        <position position="1288"/>
    </location>
</feature>
<feature type="modified residue" description="Phosphoserine" evidence="25">
    <location>
        <position position="1327"/>
    </location>
</feature>
<feature type="modified residue" description="Phosphoserine" evidence="25">
    <location>
        <position position="1377"/>
    </location>
</feature>
<feature type="modified residue" description="Phosphoserine" evidence="25">
    <location>
        <position position="1457"/>
    </location>
</feature>
<feature type="modified residue" description="Phosphoserine" evidence="25">
    <location>
        <position position="1541"/>
    </location>
</feature>
<feature type="splice variant" id="VSP_008131" description="In isoform 2." evidence="16 17">
    <location>
        <begin position="48"/>
        <end position="66"/>
    </location>
</feature>
<feature type="sequence variant" id="VAR_020191" description="In dbSNP:rs2305013." evidence="15">
    <original>Y</original>
    <variation>F</variation>
    <location>
        <position position="973"/>
    </location>
</feature>
<feature type="strand" evidence="28">
    <location>
        <begin position="70"/>
        <end position="76"/>
    </location>
</feature>
<feature type="strand" evidence="28">
    <location>
        <begin position="85"/>
        <end position="87"/>
    </location>
</feature>
<feature type="strand" evidence="28">
    <location>
        <begin position="89"/>
        <end position="91"/>
    </location>
</feature>
<feature type="strand" evidence="28">
    <location>
        <begin position="93"/>
        <end position="96"/>
    </location>
</feature>
<feature type="helix" evidence="28">
    <location>
        <begin position="102"/>
        <end position="106"/>
    </location>
</feature>
<feature type="strand" evidence="28">
    <location>
        <begin position="112"/>
        <end position="119"/>
    </location>
</feature>
<feature type="turn" evidence="29">
    <location>
        <begin position="122"/>
        <end position="124"/>
    </location>
</feature>
<feature type="helix" evidence="28">
    <location>
        <begin position="127"/>
        <end position="135"/>
    </location>
</feature>
<feature type="strand" evidence="28">
    <location>
        <begin position="137"/>
        <end position="145"/>
    </location>
</feature>
<feature type="helix" evidence="26">
    <location>
        <begin position="769"/>
        <end position="772"/>
    </location>
</feature>
<feature type="helix" evidence="26">
    <location>
        <begin position="775"/>
        <end position="778"/>
    </location>
</feature>
<feature type="helix" evidence="26">
    <location>
        <begin position="783"/>
        <end position="812"/>
    </location>
</feature>
<feature type="helix" evidence="26">
    <location>
        <begin position="814"/>
        <end position="820"/>
    </location>
</feature>
<feature type="helix" evidence="26">
    <location>
        <begin position="825"/>
        <end position="832"/>
    </location>
</feature>
<feature type="helix" evidence="26">
    <location>
        <begin position="835"/>
        <end position="853"/>
    </location>
</feature>
<feature type="strand" evidence="27">
    <location>
        <begin position="857"/>
        <end position="860"/>
    </location>
</feature>
<feature type="helix" evidence="26">
    <location>
        <begin position="865"/>
        <end position="872"/>
    </location>
</feature>
<feature type="helix" evidence="26">
    <location>
        <begin position="875"/>
        <end position="889"/>
    </location>
</feature>
<feature type="helix" evidence="26">
    <location>
        <begin position="891"/>
        <end position="904"/>
    </location>
</feature>
<feature type="helix" evidence="26">
    <location>
        <begin position="906"/>
        <end position="917"/>
    </location>
</feature>
<feature type="helix" evidence="26">
    <location>
        <begin position="919"/>
        <end position="921"/>
    </location>
</feature>
<feature type="helix" evidence="26">
    <location>
        <begin position="926"/>
        <end position="929"/>
    </location>
</feature>
<feature type="helix" evidence="26">
    <location>
        <begin position="932"/>
        <end position="949"/>
    </location>
</feature>
<feature type="helix" evidence="26">
    <location>
        <begin position="954"/>
        <end position="993"/>
    </location>
</feature>
<feature type="strand" evidence="27">
    <location>
        <begin position="1001"/>
        <end position="1003"/>
    </location>
</feature>
<feature type="helix" evidence="27">
    <location>
        <begin position="1005"/>
        <end position="1007"/>
    </location>
</feature>
<feature type="helix" evidence="26">
    <location>
        <begin position="1008"/>
        <end position="1011"/>
    </location>
</feature>
<feature type="helix" evidence="26">
    <location>
        <begin position="1015"/>
        <end position="1017"/>
    </location>
</feature>
<feature type="strand" evidence="26">
    <location>
        <begin position="1020"/>
        <end position="1033"/>
    </location>
</feature>
<feature type="strand" evidence="26">
    <location>
        <begin position="1038"/>
        <end position="1053"/>
    </location>
</feature>
<feature type="strand" evidence="26">
    <location>
        <begin position="1056"/>
        <end position="1058"/>
    </location>
</feature>
<feature type="strand" evidence="26">
    <location>
        <begin position="1078"/>
        <end position="1081"/>
    </location>
</feature>
<feature type="helix" evidence="26">
    <location>
        <begin position="1082"/>
        <end position="1084"/>
    </location>
</feature>
<feature type="strand" evidence="26">
    <location>
        <begin position="1085"/>
        <end position="1089"/>
    </location>
</feature>
<feature type="strand" evidence="27">
    <location>
        <begin position="1091"/>
        <end position="1093"/>
    </location>
</feature>
<feature type="strand" evidence="26">
    <location>
        <begin position="1096"/>
        <end position="1102"/>
    </location>
</feature>
<feature type="strand" evidence="26">
    <location>
        <begin position="1107"/>
        <end position="1113"/>
    </location>
</feature>
<feature type="helix" evidence="26">
    <location>
        <begin position="1117"/>
        <end position="1137"/>
    </location>
</feature>
<feature type="modified residue" description="Phosphoserine" evidence="20 21 25">
    <location sequence="Q9NZN5-2">
        <position position="41"/>
    </location>
</feature>
<name>ARHGC_HUMAN</name>
<accession>Q9NZN5</accession>
<accession>O15086</accession>
<accession>Q6P526</accession>
<organism>
    <name type="scientific">Homo sapiens</name>
    <name type="common">Human</name>
    <dbReference type="NCBI Taxonomy" id="9606"/>
    <lineage>
        <taxon>Eukaryota</taxon>
        <taxon>Metazoa</taxon>
        <taxon>Chordata</taxon>
        <taxon>Craniata</taxon>
        <taxon>Vertebrata</taxon>
        <taxon>Euteleostomi</taxon>
        <taxon>Mammalia</taxon>
        <taxon>Eutheria</taxon>
        <taxon>Euarchontoglires</taxon>
        <taxon>Primates</taxon>
        <taxon>Haplorrhini</taxon>
        <taxon>Catarrhini</taxon>
        <taxon>Hominidae</taxon>
        <taxon>Homo</taxon>
    </lineage>
</organism>
<comment type="function">
    <text evidence="7">May play a role in the regulation of RhoA GTPase by guanine nucleotide-binding alpha-12 (GNA12) and alpha-13 (GNA13). Acts as guanine nucleotide exchange factor (GEF) for RhoA GTPase and may act as GTPase-activating protein (GAP) for GNA12 and GNA13.</text>
</comment>
<comment type="subunit">
    <text evidence="7 8 9 10 11 12 13 14">Interacts with GNA12 and GNA13, probably through the RGS-like domain. Interacts with RHOA, PLXNB1 and PLXNB2. Interacts through its PDZ domain with IGF1R beta subunit. Interacts with GCSAM. Found in a complex with ARHGEF11 and ARHGEF12; binding to ARHGEF11 and ARHGEF12 enhances CDC42 GEF activity of PLEKHG4B, and PLEKHG4B, in turn, inhibits ARHGEF11- and ARHGEF12-mediated RHOA activation (PubMed:32203420).</text>
</comment>
<comment type="interaction">
    <interactant intactId="EBI-821440">
        <id>Q9NZN5</id>
    </interactant>
    <interactant intactId="EBI-373132">
        <id>O14908</id>
        <label>GIPC1</label>
    </interactant>
    <organismsDiffer>false</organismsDiffer>
    <experiments>8</experiments>
</comment>
<comment type="interaction">
    <interactant intactId="EBI-821440">
        <id>Q9NZN5</id>
    </interactant>
    <interactant intactId="EBI-475981">
        <id>P08069</id>
        <label>IGF1R</label>
    </interactant>
    <organismsDiffer>false</organismsDiffer>
    <experiments>7</experiments>
</comment>
<comment type="interaction">
    <interactant intactId="EBI-821440">
        <id>Q9NZN5</id>
    </interactant>
    <interactant intactId="EBI-446668">
        <id>P61586</id>
        <label>RHOA</label>
    </interactant>
    <organismsDiffer>false</organismsDiffer>
    <experiments>4</experiments>
</comment>
<comment type="interaction">
    <interactant intactId="EBI-821440">
        <id>Q9NZN5</id>
    </interactant>
    <interactant intactId="EBI-7512335">
        <id>P61793</id>
        <label>Lpar1</label>
    </interactant>
    <organismsDiffer>true</organismsDiffer>
    <experiments>3</experiments>
</comment>
<comment type="interaction">
    <interactant intactId="EBI-9640168">
        <id>Q9NZN5-1</id>
    </interactant>
    <interactant intactId="EBI-11741362">
        <id>Q96PX9</id>
        <label>PLEKHG4B</label>
    </interactant>
    <organismsDiffer>false</organismsDiffer>
    <experiments>3</experiments>
</comment>
<comment type="subcellular location">
    <subcellularLocation>
        <location evidence="18">Cytoplasm</location>
    </subcellularLocation>
    <subcellularLocation>
        <location evidence="18">Membrane</location>
    </subcellularLocation>
    <text evidence="18">Translocated to the membrane upon stimulation.</text>
</comment>
<comment type="alternative products">
    <event type="alternative splicing"/>
    <isoform>
        <id>Q9NZN5-1</id>
        <name>1</name>
        <sequence type="displayed"/>
    </isoform>
    <isoform>
        <id>Q9NZN5-2</id>
        <name>2</name>
        <sequence type="described" ref="VSP_008131"/>
    </isoform>
</comment>
<comment type="tissue specificity">
    <text>Ubiquitously expressed. Isoform 2 is found in jejunum and testis.</text>
</comment>
<comment type="disease">
    <text evidence="6">A chromosomal aberration involving ARHGEF12 may be a cause of acute leukemia. Translocation t(11;11)(q23;23) with KMT2A/MLL1.</text>
</comment>
<comment type="sequence caution" evidence="18">
    <conflict type="miscellaneous discrepancy">
        <sequence resource="EMBL-CDS" id="AAH63117"/>
    </conflict>
    <text>Contaminating sequence. Potential poly-A sequence.</text>
</comment>
<comment type="online information" name="Atlas of Genetics and Cytogenetics in Oncology and Haematology">
    <link uri="https://atlasgeneticsoncology.org/gene/243/LARG"/>
</comment>
<reference key="1">
    <citation type="journal article" date="2000" name="Proc. Natl. Acad. Sci. U.S.A.">
        <title>Identification of a gene at 11q23 encoding a guanine nucleotide exchange factor: evidence for its fusion with MLL in acute myeloid leukemia.</title>
        <authorList>
            <person name="Kourlas P.J."/>
            <person name="Strout M.P."/>
            <person name="Becknell B."/>
            <person name="Veronese M.L."/>
            <person name="Croce C.M."/>
            <person name="Theil K.S."/>
            <person name="Krahe R."/>
            <person name="Ruutu T."/>
            <person name="Knuutila S."/>
            <person name="Bloomfield C.D."/>
            <person name="Caligiuri M.A."/>
        </authorList>
    </citation>
    <scope>NUCLEOTIDE SEQUENCE [MRNA] (ISOFORMS 1 AND 2)</scope>
    <scope>CHROMOSOMAL TRANSLOCATION</scope>
    <source>
        <tissue>Prostate</tissue>
    </source>
</reference>
<reference key="2">
    <citation type="journal article" date="2004" name="Genome Res.">
        <title>The status, quality, and expansion of the NIH full-length cDNA project: the Mammalian Gene Collection (MGC).</title>
        <authorList>
            <consortium name="The MGC Project Team"/>
        </authorList>
    </citation>
    <scope>NUCLEOTIDE SEQUENCE [LARGE SCALE MRNA] OF 1-584 (ISOFORM 2)</scope>
    <source>
        <tissue>Thyroid</tissue>
    </source>
</reference>
<reference key="3">
    <citation type="journal article" date="1997" name="DNA Res.">
        <title>Prediction of the coding sequences of unidentified human genes. VII. The complete sequences of 100 new cDNA clones from brain which can code for large proteins in vitro.</title>
        <authorList>
            <person name="Nagase T."/>
            <person name="Ishikawa K."/>
            <person name="Nakajima D."/>
            <person name="Ohira M."/>
            <person name="Seki N."/>
            <person name="Miyajima N."/>
            <person name="Tanaka A."/>
            <person name="Kotani H."/>
            <person name="Nomura N."/>
            <person name="Ohara O."/>
        </authorList>
    </citation>
    <scope>NUCLEOTIDE SEQUENCE [LARGE SCALE MRNA] OF 102-1544</scope>
    <scope>VARIANT PHE-973</scope>
    <source>
        <tissue>Brain</tissue>
    </source>
</reference>
<reference key="4">
    <citation type="submission" date="2005-08" db="EMBL/GenBank/DDBJ databases">
        <authorList>
            <person name="Ohara O."/>
            <person name="Nagase T."/>
            <person name="Kikuno R."/>
            <person name="Nomura N."/>
        </authorList>
    </citation>
    <scope>SEQUENCE REVISION</scope>
</reference>
<reference key="5">
    <citation type="journal article" date="2000" name="FEBS Lett.">
        <title>Leukemia-associated Rho guanine nucleotide exchange factor (LARG) links heterotrimeric G proteins of the G(12) family to Rho.</title>
        <authorList>
            <person name="Fukuhara S."/>
            <person name="Chikumi H."/>
            <person name="Gutkind J.S."/>
        </authorList>
    </citation>
    <scope>FUNCTION</scope>
    <scope>INTERACTION WITH RHOA; GNA12 AND GNA13</scope>
</reference>
<reference key="6">
    <citation type="journal article" date="2001" name="J. Cell Biol.">
        <title>Direct interaction of insulin-like growth factor-1 receptor with leukemia-associated RhoGEF.</title>
        <authorList>
            <person name="Taya S."/>
            <person name="Inagaki N."/>
            <person name="Sengiku H."/>
            <person name="Makino H."/>
            <person name="Iwamatsu A."/>
            <person name="Urakawa I."/>
            <person name="Nagao K."/>
            <person name="Kataoka S."/>
            <person name="Kaibuchi K."/>
        </authorList>
    </citation>
    <scope>INTERACTION WITH IGF1R</scope>
</reference>
<reference key="7">
    <citation type="journal article" date="2002" name="FEBS Lett.">
        <title>B plexins activate Rho through PDZ-RhoGEF.</title>
        <authorList>
            <person name="Driessens M.H.E."/>
            <person name="Olivo C."/>
            <person name="Nagata K."/>
            <person name="Inagaki M."/>
            <person name="Collard J.G."/>
        </authorList>
    </citation>
    <scope>INTERACTION WITH PLXNB1 AND PLXNB2</scope>
</reference>
<reference key="8">
    <citation type="journal article" date="2002" name="J. Biol. Chem.">
        <title>Plexin B regulates Rho through the guanine nucleotide exchange factors leukemia-associated Rho GEF (LARG) and PDZ-RhoGEF.</title>
        <authorList>
            <person name="Perrot V."/>
            <person name="Vazquez-Prado J."/>
            <person name="Gutkind J.S."/>
        </authorList>
    </citation>
    <scope>INTERACTION WITH PLXNB1 AND PLXNB2</scope>
</reference>
<reference key="9">
    <citation type="journal article" date="2007" name="Science">
        <title>ATM and ATR substrate analysis reveals extensive protein networks responsive to DNA damage.</title>
        <authorList>
            <person name="Matsuoka S."/>
            <person name="Ballif B.A."/>
            <person name="Smogorzewska A."/>
            <person name="McDonald E.R. III"/>
            <person name="Hurov K.E."/>
            <person name="Luo J."/>
            <person name="Bakalarski C.E."/>
            <person name="Zhao Z."/>
            <person name="Solimini N."/>
            <person name="Lerenthal Y."/>
            <person name="Shiloh Y."/>
            <person name="Gygi S.P."/>
            <person name="Elledge S.J."/>
        </authorList>
    </citation>
    <scope>IDENTIFICATION BY MASS SPECTROMETRY [LARGE SCALE ANALYSIS]</scope>
    <source>
        <tissue>Embryonic kidney</tissue>
    </source>
</reference>
<reference key="10">
    <citation type="journal article" date="2008" name="J. Proteome Res.">
        <title>Combining protein-based IMAC, peptide-based IMAC, and MudPIT for efficient phosphoproteomic analysis.</title>
        <authorList>
            <person name="Cantin G.T."/>
            <person name="Yi W."/>
            <person name="Lu B."/>
            <person name="Park S.K."/>
            <person name="Xu T."/>
            <person name="Lee J.-D."/>
            <person name="Yates J.R. III"/>
        </authorList>
    </citation>
    <scope>PHOSPHORYLATION [LARGE SCALE ANALYSIS] AT SER-41 (ISOFORM 2)</scope>
    <scope>IDENTIFICATION BY MASS SPECTROMETRY [LARGE SCALE ANALYSIS]</scope>
    <source>
        <tissue>Cervix carcinoma</tissue>
    </source>
</reference>
<reference key="11">
    <citation type="journal article" date="2008" name="J. Proteome Res.">
        <title>Phosphoproteome of resting human platelets.</title>
        <authorList>
            <person name="Zahedi R.P."/>
            <person name="Lewandrowski U."/>
            <person name="Wiesner J."/>
            <person name="Wortelkamp S."/>
            <person name="Moebius J."/>
            <person name="Schuetz C."/>
            <person name="Walter U."/>
            <person name="Gambaryan S."/>
            <person name="Sickmann A."/>
        </authorList>
    </citation>
    <scope>PHOSPHORYLATION [LARGE SCALE ANALYSIS] AT THR-736</scope>
    <scope>IDENTIFICATION BY MASS SPECTROMETRY [LARGE SCALE ANALYSIS]</scope>
    <source>
        <tissue>Platelet</tissue>
    </source>
</reference>
<reference key="12">
    <citation type="journal article" date="2008" name="Proc. Natl. Acad. Sci. U.S.A.">
        <title>A quantitative atlas of mitotic phosphorylation.</title>
        <authorList>
            <person name="Dephoure N."/>
            <person name="Zhou C."/>
            <person name="Villen J."/>
            <person name="Beausoleil S.A."/>
            <person name="Bakalarski C.E."/>
            <person name="Elledge S.J."/>
            <person name="Gygi S.P."/>
        </authorList>
    </citation>
    <scope>PHOSPHORYLATION [LARGE SCALE ANALYSIS] AT SER-341</scope>
    <scope>PHOSPHORYLATION [LARGE SCALE ANALYSIS] AT SER-41 (ISOFORM 2)</scope>
    <scope>IDENTIFICATION BY MASS SPECTROMETRY [LARGE SCALE ANALYSIS]</scope>
    <source>
        <tissue>Cervix carcinoma</tissue>
    </source>
</reference>
<reference key="13">
    <citation type="journal article" date="2009" name="Anal. Chem.">
        <title>Lys-N and trypsin cover complementary parts of the phosphoproteome in a refined SCX-based approach.</title>
        <authorList>
            <person name="Gauci S."/>
            <person name="Helbig A.O."/>
            <person name="Slijper M."/>
            <person name="Krijgsveld J."/>
            <person name="Heck A.J."/>
            <person name="Mohammed S."/>
        </authorList>
    </citation>
    <scope>ACETYLATION [LARGE SCALE ANALYSIS] AT SER-2</scope>
    <scope>CLEAVAGE OF INITIATOR METHIONINE [LARGE SCALE ANALYSIS]</scope>
    <scope>IDENTIFICATION BY MASS SPECTROMETRY [LARGE SCALE ANALYSIS]</scope>
</reference>
<reference key="14">
    <citation type="journal article" date="2009" name="Sci. Signal.">
        <title>Quantitative phosphoproteomic analysis of T cell receptor signaling reveals system-wide modulation of protein-protein interactions.</title>
        <authorList>
            <person name="Mayya V."/>
            <person name="Lundgren D.H."/>
            <person name="Hwang S.-I."/>
            <person name="Rezaul K."/>
            <person name="Wu L."/>
            <person name="Eng J.K."/>
            <person name="Rodionov V."/>
            <person name="Han D.K."/>
        </authorList>
    </citation>
    <scope>IDENTIFICATION BY MASS SPECTROMETRY [LARGE SCALE ANALYSIS]</scope>
    <source>
        <tissue>Leukemic T-cell</tissue>
    </source>
</reference>
<reference key="15">
    <citation type="journal article" date="2010" name="Blood">
        <title>HGAL, a germinal center specific protein, decreases lymphoma cell motility by modulation of the RhoA signaling pathway.</title>
        <authorList>
            <person name="Jiang X."/>
            <person name="Lu X."/>
            <person name="McNamara G."/>
            <person name="Liu X."/>
            <person name="Cubedo E."/>
            <person name="Sarosiek K.A."/>
            <person name="Sanchez-Garcia I."/>
            <person name="Helfman D.M."/>
            <person name="Lossos I.S."/>
        </authorList>
    </citation>
    <scope>INTERACTION WITH GCSAM</scope>
</reference>
<reference key="16">
    <citation type="journal article" date="2010" name="Sci. Signal.">
        <title>Quantitative phosphoproteomics reveals widespread full phosphorylation site occupancy during mitosis.</title>
        <authorList>
            <person name="Olsen J.V."/>
            <person name="Vermeulen M."/>
            <person name="Santamaria A."/>
            <person name="Kumar C."/>
            <person name="Miller M.L."/>
            <person name="Jensen L.J."/>
            <person name="Gnad F."/>
            <person name="Cox J."/>
            <person name="Jensen T.S."/>
            <person name="Nigg E.A."/>
            <person name="Brunak S."/>
            <person name="Mann M."/>
        </authorList>
    </citation>
    <scope>PHOSPHORYLATION [LARGE SCALE ANALYSIS] AT SER-637</scope>
    <scope>IDENTIFICATION BY MASS SPECTROMETRY [LARGE SCALE ANALYSIS]</scope>
    <source>
        <tissue>Cervix carcinoma</tissue>
    </source>
</reference>
<reference key="17">
    <citation type="journal article" date="2011" name="BMC Syst. Biol.">
        <title>Initial characterization of the human central proteome.</title>
        <authorList>
            <person name="Burkard T.R."/>
            <person name="Planyavsky M."/>
            <person name="Kaupe I."/>
            <person name="Breitwieser F.P."/>
            <person name="Buerckstuemmer T."/>
            <person name="Bennett K.L."/>
            <person name="Superti-Furga G."/>
            <person name="Colinge J."/>
        </authorList>
    </citation>
    <scope>IDENTIFICATION BY MASS SPECTROMETRY [LARGE SCALE ANALYSIS]</scope>
</reference>
<reference key="18">
    <citation type="journal article" date="2013" name="J. Proteome Res.">
        <title>Toward a comprehensive characterization of a human cancer cell phosphoproteome.</title>
        <authorList>
            <person name="Zhou H."/>
            <person name="Di Palma S."/>
            <person name="Preisinger C."/>
            <person name="Peng M."/>
            <person name="Polat A.N."/>
            <person name="Heck A.J."/>
            <person name="Mohammed S."/>
        </authorList>
    </citation>
    <scope>PHOSPHORYLATION [LARGE SCALE ANALYSIS] AT SER-41; SER-309; SER-341; SER-637; THR-736 AND SER-1288</scope>
    <scope>IDENTIFICATION BY MASS SPECTROMETRY [LARGE SCALE ANALYSIS]</scope>
    <source>
        <tissue>Cervix carcinoma</tissue>
        <tissue>Erythroleukemia</tissue>
    </source>
</reference>
<reference key="19">
    <citation type="journal article" date="2014" name="J. Proteomics">
        <title>An enzyme assisted RP-RPLC approach for in-depth analysis of human liver phosphoproteome.</title>
        <authorList>
            <person name="Bian Y."/>
            <person name="Song C."/>
            <person name="Cheng K."/>
            <person name="Dong M."/>
            <person name="Wang F."/>
            <person name="Huang J."/>
            <person name="Sun D."/>
            <person name="Wang L."/>
            <person name="Ye M."/>
            <person name="Zou H."/>
        </authorList>
    </citation>
    <scope>PHOSPHORYLATION [LARGE SCALE ANALYSIS] AT SER-309; SER-637; SER-1327; SER-1377; SER-1457 AND SER-1541</scope>
    <scope>PHOSPHORYLATION [LARGE SCALE ANALYSIS] AT SER-41 (ISOFORM 2)</scope>
    <scope>IDENTIFICATION BY MASS SPECTROMETRY [LARGE SCALE ANALYSIS]</scope>
    <source>
        <tissue>Liver</tissue>
    </source>
</reference>
<reference key="20">
    <citation type="journal article" date="2020" name="Nat. Cell Biol.">
        <title>Systems analysis of RhoGEF and RhoGAP regulatory proteins reveals spatially organized RAC1 signalling from integrin adhesions.</title>
        <authorList>
            <person name="Mueller P.M."/>
            <person name="Rademacher J."/>
            <person name="Bagshaw R.D."/>
            <person name="Wortmann C."/>
            <person name="Barth C."/>
            <person name="van Unen J."/>
            <person name="Alp K.M."/>
            <person name="Giudice G."/>
            <person name="Eccles R.L."/>
            <person name="Heinrich L.E."/>
            <person name="Pascual-Vargas P."/>
            <person name="Sanchez-Castro M."/>
            <person name="Brandenburg L."/>
            <person name="Mbamalu G."/>
            <person name="Tucholska M."/>
            <person name="Spatt L."/>
            <person name="Czajkowski M.T."/>
            <person name="Welke R.W."/>
            <person name="Zhang S."/>
            <person name="Nguyen V."/>
            <person name="Rrustemi T."/>
            <person name="Trnka P."/>
            <person name="Freitag K."/>
            <person name="Larsen B."/>
            <person name="Popp O."/>
            <person name="Mertins P."/>
            <person name="Gingras A.C."/>
            <person name="Roth F.P."/>
            <person name="Colwill K."/>
            <person name="Bakal C."/>
            <person name="Pertz O."/>
            <person name="Pawson T."/>
            <person name="Petsalaki E."/>
            <person name="Rocks O."/>
        </authorList>
    </citation>
    <scope>INTERACTION WITH PLEKHG4B</scope>
</reference>
<reference key="21">
    <citation type="journal article" date="2004" name="J. Biol. Chem.">
        <title>Structural determinants of RhoA binding and nucleotide exchange in leukemia-associated Rho guanine-nucleotide exchange factor.</title>
        <authorList>
            <person name="Kristelly R."/>
            <person name="Gao G."/>
            <person name="Tesmer J.J."/>
        </authorList>
    </citation>
    <scope>X-RAY CRYSTALLOGRAPHY (2.13 ANGSTROMS) OF 766-1138 IN COMPLEX WITH RHOA</scope>
    <scope>SUBUNIT</scope>
</reference>
<reference key="22">
    <citation type="journal article" date="2008" name="Protein Sci.">
        <title>Conformational change upon ligand binding and dynamics of the PDZ domain from leukemia-associated Rho guanine nucleotide exchange factor.</title>
        <authorList>
            <person name="Liu J."/>
            <person name="Zhang J."/>
            <person name="Yang Y."/>
            <person name="Huang H."/>
            <person name="Shen W."/>
            <person name="Hu Q."/>
            <person name="Wang X."/>
            <person name="Wu J."/>
            <person name="Shi Y."/>
        </authorList>
    </citation>
    <scope>STRUCTURE BY NMR OF 67-151 IN COMPLEX WITH PLXNB1</scope>
    <scope>SUBUNIT</scope>
</reference>
<dbReference type="EMBL" id="AF180681">
    <property type="protein sequence ID" value="AAF36817.1"/>
    <property type="molecule type" value="mRNA"/>
</dbReference>
<dbReference type="EMBL" id="AB002380">
    <property type="protein sequence ID" value="BAA20836.2"/>
    <property type="molecule type" value="mRNA"/>
</dbReference>
<dbReference type="EMBL" id="BC063117">
    <property type="protein sequence ID" value="AAH63117.1"/>
    <property type="status" value="ALT_SEQ"/>
    <property type="molecule type" value="mRNA"/>
</dbReference>
<dbReference type="CCDS" id="CCDS41727.1">
    <molecule id="Q9NZN5-1"/>
</dbReference>
<dbReference type="CCDS" id="CCDS55794.1">
    <molecule id="Q9NZN5-2"/>
</dbReference>
<dbReference type="RefSeq" id="NP_001185594.1">
    <molecule id="Q9NZN5-2"/>
    <property type="nucleotide sequence ID" value="NM_001198665.2"/>
</dbReference>
<dbReference type="RefSeq" id="NP_001288013.1">
    <property type="nucleotide sequence ID" value="NM_001301084.1"/>
</dbReference>
<dbReference type="RefSeq" id="NP_056128.1">
    <molecule id="Q9NZN5-1"/>
    <property type="nucleotide sequence ID" value="NM_015313.3"/>
</dbReference>
<dbReference type="RefSeq" id="XP_011541022.1">
    <property type="nucleotide sequence ID" value="XM_011542720.2"/>
</dbReference>
<dbReference type="RefSeq" id="XP_016872910.1">
    <property type="nucleotide sequence ID" value="XM_017017421.1"/>
</dbReference>
<dbReference type="PDB" id="1TXD">
    <property type="method" value="X-ray"/>
    <property type="resolution" value="2.13 A"/>
    <property type="chains" value="A=766-1138"/>
</dbReference>
<dbReference type="PDB" id="1X86">
    <property type="method" value="X-ray"/>
    <property type="resolution" value="3.22 A"/>
    <property type="chains" value="A/C/E/G=766-1138"/>
</dbReference>
<dbReference type="PDB" id="2OMJ">
    <property type="method" value="NMR"/>
    <property type="chains" value="A=67-151"/>
</dbReference>
<dbReference type="PDB" id="2OS6">
    <property type="method" value="NMR"/>
    <property type="chains" value="A=67-151"/>
</dbReference>
<dbReference type="PDBsum" id="1TXD"/>
<dbReference type="PDBsum" id="1X86"/>
<dbReference type="PDBsum" id="2OMJ"/>
<dbReference type="PDBsum" id="2OS6"/>
<dbReference type="BMRB" id="Q9NZN5"/>
<dbReference type="SMR" id="Q9NZN5"/>
<dbReference type="BioGRID" id="116945">
    <property type="interactions" value="133"/>
</dbReference>
<dbReference type="ComplexPortal" id="CPX-7724">
    <property type="entry name" value="LIFT actin modulation complex"/>
</dbReference>
<dbReference type="DIP" id="DIP-37887N"/>
<dbReference type="FunCoup" id="Q9NZN5">
    <property type="interactions" value="1754"/>
</dbReference>
<dbReference type="IntAct" id="Q9NZN5">
    <property type="interactions" value="57"/>
</dbReference>
<dbReference type="MINT" id="Q9NZN5"/>
<dbReference type="STRING" id="9606.ENSP00000380942"/>
<dbReference type="ChEMBL" id="CHEMBL4523477"/>
<dbReference type="GlyCosmos" id="Q9NZN5">
    <property type="glycosylation" value="1 site, 1 glycan"/>
</dbReference>
<dbReference type="GlyGen" id="Q9NZN5">
    <property type="glycosylation" value="1 site, 1 O-linked glycan (1 site)"/>
</dbReference>
<dbReference type="iPTMnet" id="Q9NZN5"/>
<dbReference type="PhosphoSitePlus" id="Q9NZN5"/>
<dbReference type="BioMuta" id="ARHGEF12"/>
<dbReference type="DMDM" id="34395525"/>
<dbReference type="jPOST" id="Q9NZN5"/>
<dbReference type="MassIVE" id="Q9NZN5"/>
<dbReference type="PaxDb" id="9606-ENSP00000380942"/>
<dbReference type="PeptideAtlas" id="Q9NZN5"/>
<dbReference type="ProteomicsDB" id="83460">
    <molecule id="Q9NZN5-1"/>
</dbReference>
<dbReference type="ProteomicsDB" id="83461">
    <molecule id="Q9NZN5-2"/>
</dbReference>
<dbReference type="Pumba" id="Q9NZN5"/>
<dbReference type="Antibodypedia" id="9144">
    <property type="antibodies" value="163 antibodies from 28 providers"/>
</dbReference>
<dbReference type="DNASU" id="23365"/>
<dbReference type="Ensembl" id="ENST00000356641.7">
    <molecule id="Q9NZN5-2"/>
    <property type="protein sequence ID" value="ENSP00000349056.3"/>
    <property type="gene ID" value="ENSG00000196914.9"/>
</dbReference>
<dbReference type="Ensembl" id="ENST00000397843.7">
    <molecule id="Q9NZN5-1"/>
    <property type="protein sequence ID" value="ENSP00000380942.2"/>
    <property type="gene ID" value="ENSG00000196914.9"/>
</dbReference>
<dbReference type="GeneID" id="23365"/>
<dbReference type="KEGG" id="hsa:23365"/>
<dbReference type="MANE-Select" id="ENST00000397843.7">
    <property type="protein sequence ID" value="ENSP00000380942.2"/>
    <property type="RefSeq nucleotide sequence ID" value="NM_015313.3"/>
    <property type="RefSeq protein sequence ID" value="NP_056128.1"/>
</dbReference>
<dbReference type="UCSC" id="uc001pxl.3">
    <molecule id="Q9NZN5-1"/>
    <property type="organism name" value="human"/>
</dbReference>
<dbReference type="AGR" id="HGNC:14193"/>
<dbReference type="CTD" id="23365"/>
<dbReference type="DisGeNET" id="23365"/>
<dbReference type="GeneCards" id="ARHGEF12"/>
<dbReference type="HGNC" id="HGNC:14193">
    <property type="gene designation" value="ARHGEF12"/>
</dbReference>
<dbReference type="HPA" id="ENSG00000196914">
    <property type="expression patterns" value="Low tissue specificity"/>
</dbReference>
<dbReference type="MIM" id="604763">
    <property type="type" value="gene"/>
</dbReference>
<dbReference type="neXtProt" id="NX_Q9NZN5"/>
<dbReference type="OpenTargets" id="ENSG00000196914"/>
<dbReference type="PharmGKB" id="PA24969"/>
<dbReference type="VEuPathDB" id="HostDB:ENSG00000196914"/>
<dbReference type="eggNOG" id="KOG3520">
    <property type="taxonomic scope" value="Eukaryota"/>
</dbReference>
<dbReference type="GeneTree" id="ENSGT00940000157662"/>
<dbReference type="HOGENOM" id="CLU_003962_1_0_1"/>
<dbReference type="InParanoid" id="Q9NZN5"/>
<dbReference type="OMA" id="FLPKIKX"/>
<dbReference type="OrthoDB" id="2272012at2759"/>
<dbReference type="PAN-GO" id="Q9NZN5">
    <property type="GO annotations" value="4 GO annotations based on evolutionary models"/>
</dbReference>
<dbReference type="PhylomeDB" id="Q9NZN5"/>
<dbReference type="TreeFam" id="TF106495"/>
<dbReference type="PathwayCommons" id="Q9NZN5"/>
<dbReference type="Reactome" id="R-HSA-193648">
    <property type="pathway name" value="NRAGE signals death through JNK"/>
</dbReference>
<dbReference type="Reactome" id="R-HSA-416482">
    <property type="pathway name" value="G alpha (12/13) signalling events"/>
</dbReference>
<dbReference type="Reactome" id="R-HSA-416572">
    <property type="pathway name" value="Sema4D induced cell migration and growth-cone collapse"/>
</dbReference>
<dbReference type="Reactome" id="R-HSA-8980692">
    <property type="pathway name" value="RHOA GTPase cycle"/>
</dbReference>
<dbReference type="Reactome" id="R-HSA-9013026">
    <property type="pathway name" value="RHOB GTPase cycle"/>
</dbReference>
<dbReference type="Reactome" id="R-HSA-9013106">
    <property type="pathway name" value="RHOC GTPase cycle"/>
</dbReference>
<dbReference type="Reactome" id="R-HSA-9013148">
    <property type="pathway name" value="CDC42 GTPase cycle"/>
</dbReference>
<dbReference type="SignaLink" id="Q9NZN5"/>
<dbReference type="SIGNOR" id="Q9NZN5"/>
<dbReference type="BioGRID-ORCS" id="23365">
    <property type="hits" value="25 hits in 1151 CRISPR screens"/>
</dbReference>
<dbReference type="ChiTaRS" id="ARHGEF12">
    <property type="organism name" value="human"/>
</dbReference>
<dbReference type="EvolutionaryTrace" id="Q9NZN5"/>
<dbReference type="GeneWiki" id="ARHGEF12"/>
<dbReference type="GenomeRNAi" id="23365"/>
<dbReference type="Pharos" id="Q9NZN5">
    <property type="development level" value="Tchem"/>
</dbReference>
<dbReference type="PRO" id="PR:Q9NZN5"/>
<dbReference type="Proteomes" id="UP000005640">
    <property type="component" value="Chromosome 11"/>
</dbReference>
<dbReference type="RNAct" id="Q9NZN5">
    <property type="molecule type" value="protein"/>
</dbReference>
<dbReference type="Bgee" id="ENSG00000196914">
    <property type="expression patterns" value="Expressed in upper leg skin and 205 other cell types or tissues"/>
</dbReference>
<dbReference type="ExpressionAtlas" id="Q9NZN5">
    <property type="expression patterns" value="baseline and differential"/>
</dbReference>
<dbReference type="GO" id="GO:0005737">
    <property type="term" value="C:cytoplasm"/>
    <property type="evidence" value="ECO:0000314"/>
    <property type="project" value="MGI"/>
</dbReference>
<dbReference type="GO" id="GO:0005829">
    <property type="term" value="C:cytosol"/>
    <property type="evidence" value="ECO:0000304"/>
    <property type="project" value="Reactome"/>
</dbReference>
<dbReference type="GO" id="GO:0070062">
    <property type="term" value="C:extracellular exosome"/>
    <property type="evidence" value="ECO:0007005"/>
    <property type="project" value="UniProtKB"/>
</dbReference>
<dbReference type="GO" id="GO:0016020">
    <property type="term" value="C:membrane"/>
    <property type="evidence" value="ECO:0007669"/>
    <property type="project" value="UniProtKB-SubCell"/>
</dbReference>
<dbReference type="GO" id="GO:0001664">
    <property type="term" value="F:G protein-coupled receptor binding"/>
    <property type="evidence" value="ECO:0000314"/>
    <property type="project" value="MGI"/>
</dbReference>
<dbReference type="GO" id="GO:0005096">
    <property type="term" value="F:GTPase activator activity"/>
    <property type="evidence" value="ECO:0007669"/>
    <property type="project" value="UniProtKB-KW"/>
</dbReference>
<dbReference type="GO" id="GO:0005085">
    <property type="term" value="F:guanyl-nucleotide exchange factor activity"/>
    <property type="evidence" value="ECO:0000314"/>
    <property type="project" value="UniProtKB"/>
</dbReference>
<dbReference type="GO" id="GO:0007186">
    <property type="term" value="P:G protein-coupled receptor signaling pathway"/>
    <property type="evidence" value="ECO:0000314"/>
    <property type="project" value="MGI"/>
</dbReference>
<dbReference type="GO" id="GO:0051056">
    <property type="term" value="P:regulation of small GTPase mediated signal transduction"/>
    <property type="evidence" value="ECO:0000304"/>
    <property type="project" value="Reactome"/>
</dbReference>
<dbReference type="GO" id="GO:0007266">
    <property type="term" value="P:Rho protein signal transduction"/>
    <property type="evidence" value="ECO:0007669"/>
    <property type="project" value="InterPro"/>
</dbReference>
<dbReference type="GO" id="GO:0160221">
    <property type="term" value="P:Rho-activating G protein-coupled receptor signaling pathway"/>
    <property type="evidence" value="ECO:0000314"/>
    <property type="project" value="UniProtKB"/>
</dbReference>
<dbReference type="CDD" id="cd23069">
    <property type="entry name" value="PDZ_ARHGEF11-12-like"/>
    <property type="match status" value="1"/>
</dbReference>
<dbReference type="CDD" id="cd13390">
    <property type="entry name" value="PH_LARG"/>
    <property type="match status" value="1"/>
</dbReference>
<dbReference type="CDD" id="cd08754">
    <property type="entry name" value="RGS_LARG"/>
    <property type="match status" value="1"/>
</dbReference>
<dbReference type="CDD" id="cd00160">
    <property type="entry name" value="RhoGEF"/>
    <property type="match status" value="1"/>
</dbReference>
<dbReference type="FunFam" id="1.20.900.10:FF:000006">
    <property type="entry name" value="Rho guanine nucleotide exchange factor (GEF) 11"/>
    <property type="match status" value="1"/>
</dbReference>
<dbReference type="FunFam" id="2.30.42.10:FF:000033">
    <property type="entry name" value="Rho guanine nucleotide exchange factor (GEF) 11"/>
    <property type="match status" value="1"/>
</dbReference>
<dbReference type="FunFam" id="2.30.29.30:FF:000072">
    <property type="entry name" value="Rho guanine nucleotide exchange factor 1"/>
    <property type="match status" value="1"/>
</dbReference>
<dbReference type="FunFam" id="1.10.167.10:FF:000008">
    <property type="entry name" value="rho guanine nucleotide exchange factor 12"/>
    <property type="match status" value="1"/>
</dbReference>
<dbReference type="Gene3D" id="2.30.42.10">
    <property type="match status" value="1"/>
</dbReference>
<dbReference type="Gene3D" id="1.20.900.10">
    <property type="entry name" value="Dbl homology (DH) domain"/>
    <property type="match status" value="1"/>
</dbReference>
<dbReference type="Gene3D" id="2.30.29.30">
    <property type="entry name" value="Pleckstrin-homology domain (PH domain)/Phosphotyrosine-binding domain (PTB)"/>
    <property type="match status" value="1"/>
</dbReference>
<dbReference type="Gene3D" id="1.10.167.10">
    <property type="entry name" value="Regulator of G-protein Signalling 4, domain 2"/>
    <property type="match status" value="1"/>
</dbReference>
<dbReference type="InterPro" id="IPR037801">
    <property type="entry name" value="ARHGEF12_PH"/>
</dbReference>
<dbReference type="InterPro" id="IPR035899">
    <property type="entry name" value="DBL_dom_sf"/>
</dbReference>
<dbReference type="InterPro" id="IPR000219">
    <property type="entry name" value="DH_dom"/>
</dbReference>
<dbReference type="InterPro" id="IPR001331">
    <property type="entry name" value="GDS_CDC24_CS"/>
</dbReference>
<dbReference type="InterPro" id="IPR037884">
    <property type="entry name" value="LARG_RGS"/>
</dbReference>
<dbReference type="InterPro" id="IPR001478">
    <property type="entry name" value="PDZ"/>
</dbReference>
<dbReference type="InterPro" id="IPR036034">
    <property type="entry name" value="PDZ_sf"/>
</dbReference>
<dbReference type="InterPro" id="IPR011993">
    <property type="entry name" value="PH-like_dom_sf"/>
</dbReference>
<dbReference type="InterPro" id="IPR041020">
    <property type="entry name" value="PH_16"/>
</dbReference>
<dbReference type="InterPro" id="IPR001849">
    <property type="entry name" value="PH_domain"/>
</dbReference>
<dbReference type="InterPro" id="IPR015212">
    <property type="entry name" value="RGS-like_dom"/>
</dbReference>
<dbReference type="InterPro" id="IPR036305">
    <property type="entry name" value="RGS_sf"/>
</dbReference>
<dbReference type="InterPro" id="IPR044926">
    <property type="entry name" value="RGS_subdomain_2"/>
</dbReference>
<dbReference type="PANTHER" id="PTHR45872:SF3">
    <property type="entry name" value="RHO GUANINE NUCLEOTIDE EXCHANGE FACTOR 12"/>
    <property type="match status" value="1"/>
</dbReference>
<dbReference type="PANTHER" id="PTHR45872">
    <property type="entry name" value="RHO GUANINE NUCLEOTIDE EXCHANGE FACTOR 2, ISOFORM D"/>
    <property type="match status" value="1"/>
</dbReference>
<dbReference type="Pfam" id="PF00595">
    <property type="entry name" value="PDZ"/>
    <property type="match status" value="1"/>
</dbReference>
<dbReference type="Pfam" id="PF17838">
    <property type="entry name" value="PH_16"/>
    <property type="match status" value="1"/>
</dbReference>
<dbReference type="Pfam" id="PF09128">
    <property type="entry name" value="RGS-like"/>
    <property type="match status" value="1"/>
</dbReference>
<dbReference type="Pfam" id="PF00621">
    <property type="entry name" value="RhoGEF"/>
    <property type="match status" value="1"/>
</dbReference>
<dbReference type="SMART" id="SM00228">
    <property type="entry name" value="PDZ"/>
    <property type="match status" value="1"/>
</dbReference>
<dbReference type="SMART" id="SM00233">
    <property type="entry name" value="PH"/>
    <property type="match status" value="1"/>
</dbReference>
<dbReference type="SMART" id="SM00325">
    <property type="entry name" value="RhoGEF"/>
    <property type="match status" value="1"/>
</dbReference>
<dbReference type="SUPFAM" id="SSF48065">
    <property type="entry name" value="DBL homology domain (DH-domain)"/>
    <property type="match status" value="1"/>
</dbReference>
<dbReference type="SUPFAM" id="SSF50156">
    <property type="entry name" value="PDZ domain-like"/>
    <property type="match status" value="1"/>
</dbReference>
<dbReference type="SUPFAM" id="SSF50729">
    <property type="entry name" value="PH domain-like"/>
    <property type="match status" value="1"/>
</dbReference>
<dbReference type="SUPFAM" id="SSF48097">
    <property type="entry name" value="Regulator of G-protein signaling, RGS"/>
    <property type="match status" value="1"/>
</dbReference>
<dbReference type="PROSITE" id="PS00741">
    <property type="entry name" value="DH_1"/>
    <property type="match status" value="1"/>
</dbReference>
<dbReference type="PROSITE" id="PS50010">
    <property type="entry name" value="DH_2"/>
    <property type="match status" value="1"/>
</dbReference>
<dbReference type="PROSITE" id="PS50106">
    <property type="entry name" value="PDZ"/>
    <property type="match status" value="1"/>
</dbReference>
<dbReference type="PROSITE" id="PS50003">
    <property type="entry name" value="PH_DOMAIN"/>
    <property type="match status" value="1"/>
</dbReference>
<gene>
    <name type="primary">ARHGEF12</name>
    <name type="synonym">KIAA0382</name>
    <name type="synonym">LARG</name>
</gene>
<proteinExistence type="evidence at protein level"/>
<keyword id="KW-0002">3D-structure</keyword>
<keyword id="KW-0007">Acetylation</keyword>
<keyword id="KW-0025">Alternative splicing</keyword>
<keyword id="KW-0160">Chromosomal rearrangement</keyword>
<keyword id="KW-0175">Coiled coil</keyword>
<keyword id="KW-0963">Cytoplasm</keyword>
<keyword id="KW-0343">GTPase activation</keyword>
<keyword id="KW-0344">Guanine-nucleotide releasing factor</keyword>
<keyword id="KW-0472">Membrane</keyword>
<keyword id="KW-0597">Phosphoprotein</keyword>
<keyword id="KW-1267">Proteomics identification</keyword>
<keyword id="KW-0656">Proto-oncogene</keyword>
<keyword id="KW-1185">Reference proteome</keyword>
<evidence type="ECO:0000255" key="1"/>
<evidence type="ECO:0000255" key="2">
    <source>
        <dbReference type="PROSITE-ProRule" id="PRU00062"/>
    </source>
</evidence>
<evidence type="ECO:0000255" key="3">
    <source>
        <dbReference type="PROSITE-ProRule" id="PRU00143"/>
    </source>
</evidence>
<evidence type="ECO:0000255" key="4">
    <source>
        <dbReference type="PROSITE-ProRule" id="PRU00145"/>
    </source>
</evidence>
<evidence type="ECO:0000256" key="5">
    <source>
        <dbReference type="SAM" id="MobiDB-lite"/>
    </source>
</evidence>
<evidence type="ECO:0000269" key="6">
    <source>
    </source>
</evidence>
<evidence type="ECO:0000269" key="7">
    <source>
    </source>
</evidence>
<evidence type="ECO:0000269" key="8">
    <source>
    </source>
</evidence>
<evidence type="ECO:0000269" key="9">
    <source>
    </source>
</evidence>
<evidence type="ECO:0000269" key="10">
    <source>
    </source>
</evidence>
<evidence type="ECO:0000269" key="11">
    <source>
    </source>
</evidence>
<evidence type="ECO:0000269" key="12">
    <source>
    </source>
</evidence>
<evidence type="ECO:0000269" key="13">
    <source>
    </source>
</evidence>
<evidence type="ECO:0000269" key="14">
    <source>
    </source>
</evidence>
<evidence type="ECO:0000269" key="15">
    <source>
    </source>
</evidence>
<evidence type="ECO:0000303" key="16">
    <source>
    </source>
</evidence>
<evidence type="ECO:0000303" key="17">
    <source>
    </source>
</evidence>
<evidence type="ECO:0000305" key="18"/>
<evidence type="ECO:0007744" key="19">
    <source>
    </source>
</evidence>
<evidence type="ECO:0007744" key="20">
    <source>
    </source>
</evidence>
<evidence type="ECO:0007744" key="21">
    <source>
    </source>
</evidence>
<evidence type="ECO:0007744" key="22">
    <source>
    </source>
</evidence>
<evidence type="ECO:0007744" key="23">
    <source>
    </source>
</evidence>
<evidence type="ECO:0007744" key="24">
    <source>
    </source>
</evidence>
<evidence type="ECO:0007744" key="25">
    <source>
    </source>
</evidence>
<evidence type="ECO:0007829" key="26">
    <source>
        <dbReference type="PDB" id="1TXD"/>
    </source>
</evidence>
<evidence type="ECO:0007829" key="27">
    <source>
        <dbReference type="PDB" id="1X86"/>
    </source>
</evidence>
<evidence type="ECO:0007829" key="28">
    <source>
        <dbReference type="PDB" id="2OMJ"/>
    </source>
</evidence>
<evidence type="ECO:0007829" key="29">
    <source>
        <dbReference type="PDB" id="2OS6"/>
    </source>
</evidence>